<accession>Q1BFJ5</accession>
<keyword id="KW-0489">Methyltransferase</keyword>
<keyword id="KW-0808">Transferase</keyword>
<comment type="similarity">
    <text evidence="1">Belongs to the methyltransferase superfamily.</text>
</comment>
<proteinExistence type="inferred from homology"/>
<evidence type="ECO:0000305" key="1"/>
<dbReference type="EC" id="2.1.1.-"/>
<dbReference type="EMBL" id="CP000384">
    <property type="protein sequence ID" value="ABG06339.1"/>
    <property type="molecule type" value="Genomic_DNA"/>
</dbReference>
<dbReference type="SMR" id="Q1BFJ5"/>
<dbReference type="KEGG" id="mmc:Mmcs_0218"/>
<dbReference type="HOGENOM" id="CLU_073035_0_0_11"/>
<dbReference type="BioCyc" id="MSP164756:G1G6O-226-MONOMER"/>
<dbReference type="GO" id="GO:0008757">
    <property type="term" value="F:S-adenosylmethionine-dependent methyltransferase activity"/>
    <property type="evidence" value="ECO:0007669"/>
    <property type="project" value="InterPro"/>
</dbReference>
<dbReference type="GO" id="GO:0032259">
    <property type="term" value="P:methylation"/>
    <property type="evidence" value="ECO:0007669"/>
    <property type="project" value="UniProtKB-KW"/>
</dbReference>
<dbReference type="CDD" id="cd02440">
    <property type="entry name" value="AdoMet_MTases"/>
    <property type="match status" value="1"/>
</dbReference>
<dbReference type="Gene3D" id="3.40.50.150">
    <property type="entry name" value="Vaccinia Virus protein VP39"/>
    <property type="match status" value="1"/>
</dbReference>
<dbReference type="InterPro" id="IPR013216">
    <property type="entry name" value="Methyltransf_11"/>
</dbReference>
<dbReference type="InterPro" id="IPR029063">
    <property type="entry name" value="SAM-dependent_MTases_sf"/>
</dbReference>
<dbReference type="PANTHER" id="PTHR43591:SF24">
    <property type="entry name" value="2-METHOXY-6-POLYPRENYL-1,4-BENZOQUINOL METHYLASE, MITOCHONDRIAL"/>
    <property type="match status" value="1"/>
</dbReference>
<dbReference type="PANTHER" id="PTHR43591">
    <property type="entry name" value="METHYLTRANSFERASE"/>
    <property type="match status" value="1"/>
</dbReference>
<dbReference type="Pfam" id="PF08241">
    <property type="entry name" value="Methyltransf_11"/>
    <property type="match status" value="1"/>
</dbReference>
<dbReference type="SUPFAM" id="SSF53335">
    <property type="entry name" value="S-adenosyl-L-methionine-dependent methyltransferases"/>
    <property type="match status" value="1"/>
</dbReference>
<gene>
    <name type="ordered locus">Mmcs_0218</name>
</gene>
<protein>
    <recommendedName>
        <fullName>Uncharacterized methyltransferase Mmcs_0218</fullName>
        <ecNumber>2.1.1.-</ecNumber>
    </recommendedName>
</protein>
<name>Y218_MYCSS</name>
<sequence length="252" mass="27260">MSATELFARRATLARSVRLLSEFRFEQSDPARFYGALADDTAAMVADLWQAATETTPGGRTVLDVGGGPGFFAAAFTRRGMEYVGVEPDPREMHAGPAAQVGGRYVRASGTSLPFADGSVDVCLSSNVAEHVPDPWRLGNEMLRVTRPGGLAVLSYTVWLGPFGGHETGLTHYLGGARAADRYTRKHGHRPKNDYGSSLFAVSAHDGLEWAASTGALIAAFPRYHPRWAWWTNAVPGLREFVVSNQVLVLQP</sequence>
<feature type="chain" id="PRO_0000380607" description="Uncharacterized methyltransferase Mmcs_0218">
    <location>
        <begin position="1"/>
        <end position="252"/>
    </location>
</feature>
<organism>
    <name type="scientific">Mycobacterium sp. (strain MCS)</name>
    <dbReference type="NCBI Taxonomy" id="164756"/>
    <lineage>
        <taxon>Bacteria</taxon>
        <taxon>Bacillati</taxon>
        <taxon>Actinomycetota</taxon>
        <taxon>Actinomycetes</taxon>
        <taxon>Mycobacteriales</taxon>
        <taxon>Mycobacteriaceae</taxon>
        <taxon>Mycobacterium</taxon>
    </lineage>
</organism>
<reference key="1">
    <citation type="submission" date="2006-06" db="EMBL/GenBank/DDBJ databases">
        <title>Complete sequence of chromosome of Mycobacterium sp. MCS.</title>
        <authorList>
            <consortium name="US DOE Joint Genome Institute"/>
            <person name="Copeland A."/>
            <person name="Lucas S."/>
            <person name="Lapidus A."/>
            <person name="Barry K."/>
            <person name="Detter J.C."/>
            <person name="Glavina del Rio T."/>
            <person name="Hammon N."/>
            <person name="Israni S."/>
            <person name="Dalin E."/>
            <person name="Tice H."/>
            <person name="Pitluck S."/>
            <person name="Martinez M."/>
            <person name="Schmutz J."/>
            <person name="Larimer F."/>
            <person name="Land M."/>
            <person name="Hauser L."/>
            <person name="Kyrpides N."/>
            <person name="Kim E."/>
            <person name="Miller C.D."/>
            <person name="Hughes J.E."/>
            <person name="Anderson A.J."/>
            <person name="Sims R.C."/>
            <person name="Richardson P."/>
        </authorList>
    </citation>
    <scope>NUCLEOTIDE SEQUENCE [LARGE SCALE GENOMIC DNA]</scope>
    <source>
        <strain>MCS</strain>
    </source>
</reference>